<gene>
    <name evidence="1" type="primary">ribH</name>
    <name type="ordered locus">SSON_0392</name>
</gene>
<keyword id="KW-1185">Reference proteome</keyword>
<keyword id="KW-0686">Riboflavin biosynthesis</keyword>
<keyword id="KW-0808">Transferase</keyword>
<protein>
    <recommendedName>
        <fullName evidence="1">6,7-dimethyl-8-ribityllumazine synthase</fullName>
        <shortName evidence="1">DMRL synthase</shortName>
        <shortName evidence="1">LS</shortName>
        <shortName evidence="1">Lumazine synthase</shortName>
        <ecNumber evidence="1">2.5.1.78</ecNumber>
    </recommendedName>
</protein>
<feature type="chain" id="PRO_1000040518" description="6,7-dimethyl-8-ribityllumazine synthase">
    <location>
        <begin position="1"/>
        <end position="156"/>
    </location>
</feature>
<feature type="active site" description="Proton donor" evidence="1">
    <location>
        <position position="89"/>
    </location>
</feature>
<feature type="binding site" evidence="1">
    <location>
        <position position="22"/>
    </location>
    <ligand>
        <name>5-amino-6-(D-ribitylamino)uracil</name>
        <dbReference type="ChEBI" id="CHEBI:15934"/>
    </ligand>
</feature>
<feature type="binding site" evidence="1">
    <location>
        <begin position="57"/>
        <end position="59"/>
    </location>
    <ligand>
        <name>5-amino-6-(D-ribitylamino)uracil</name>
        <dbReference type="ChEBI" id="CHEBI:15934"/>
    </ligand>
</feature>
<feature type="binding site" evidence="1">
    <location>
        <begin position="81"/>
        <end position="83"/>
    </location>
    <ligand>
        <name>5-amino-6-(D-ribitylamino)uracil</name>
        <dbReference type="ChEBI" id="CHEBI:15934"/>
    </ligand>
</feature>
<feature type="binding site" evidence="1">
    <location>
        <begin position="86"/>
        <end position="87"/>
    </location>
    <ligand>
        <name>(2S)-2-hydroxy-3-oxobutyl phosphate</name>
        <dbReference type="ChEBI" id="CHEBI:58830"/>
    </ligand>
</feature>
<feature type="binding site" evidence="1">
    <location>
        <position position="114"/>
    </location>
    <ligand>
        <name>5-amino-6-(D-ribitylamino)uracil</name>
        <dbReference type="ChEBI" id="CHEBI:15934"/>
    </ligand>
</feature>
<feature type="binding site" evidence="1">
    <location>
        <position position="128"/>
    </location>
    <ligand>
        <name>(2S)-2-hydroxy-3-oxobutyl phosphate</name>
        <dbReference type="ChEBI" id="CHEBI:58830"/>
    </ligand>
</feature>
<organism>
    <name type="scientific">Shigella sonnei (strain Ss046)</name>
    <dbReference type="NCBI Taxonomy" id="300269"/>
    <lineage>
        <taxon>Bacteria</taxon>
        <taxon>Pseudomonadati</taxon>
        <taxon>Pseudomonadota</taxon>
        <taxon>Gammaproteobacteria</taxon>
        <taxon>Enterobacterales</taxon>
        <taxon>Enterobacteriaceae</taxon>
        <taxon>Shigella</taxon>
    </lineage>
</organism>
<sequence length="156" mass="16157">MNIIEANVATPDARVAITIARFNNFINDSLLEGAIDALKRIGQVKDENITVVWVPGAYELPLAAGALAKTGKYDAVIALGTVIRGGTAHFEYVAGGASNGLAHVAQDSEIPVAFGVLTTESIEQAIERAGTKAGNKGAEAALTALEMINVLKAIKA</sequence>
<proteinExistence type="inferred from homology"/>
<accession>Q3Z4Z4</accession>
<dbReference type="EC" id="2.5.1.78" evidence="1"/>
<dbReference type="EMBL" id="CP000038">
    <property type="protein sequence ID" value="AAZ87168.1"/>
    <property type="molecule type" value="Genomic_DNA"/>
</dbReference>
<dbReference type="SMR" id="Q3Z4Z4"/>
<dbReference type="KEGG" id="ssn:SSON_0392"/>
<dbReference type="HOGENOM" id="CLU_089358_1_1_6"/>
<dbReference type="UniPathway" id="UPA00275">
    <property type="reaction ID" value="UER00404"/>
</dbReference>
<dbReference type="Proteomes" id="UP000002529">
    <property type="component" value="Chromosome"/>
</dbReference>
<dbReference type="GO" id="GO:0005829">
    <property type="term" value="C:cytosol"/>
    <property type="evidence" value="ECO:0007669"/>
    <property type="project" value="TreeGrafter"/>
</dbReference>
<dbReference type="GO" id="GO:0009349">
    <property type="term" value="C:riboflavin synthase complex"/>
    <property type="evidence" value="ECO:0007669"/>
    <property type="project" value="InterPro"/>
</dbReference>
<dbReference type="GO" id="GO:0000906">
    <property type="term" value="F:6,7-dimethyl-8-ribityllumazine synthase activity"/>
    <property type="evidence" value="ECO:0007669"/>
    <property type="project" value="UniProtKB-UniRule"/>
</dbReference>
<dbReference type="GO" id="GO:0009231">
    <property type="term" value="P:riboflavin biosynthetic process"/>
    <property type="evidence" value="ECO:0007669"/>
    <property type="project" value="UniProtKB-UniRule"/>
</dbReference>
<dbReference type="CDD" id="cd09209">
    <property type="entry name" value="Lumazine_synthase-I"/>
    <property type="match status" value="1"/>
</dbReference>
<dbReference type="FunFam" id="3.40.50.960:FF:000001">
    <property type="entry name" value="6,7-dimethyl-8-ribityllumazine synthase"/>
    <property type="match status" value="1"/>
</dbReference>
<dbReference type="Gene3D" id="3.40.50.960">
    <property type="entry name" value="Lumazine/riboflavin synthase"/>
    <property type="match status" value="1"/>
</dbReference>
<dbReference type="HAMAP" id="MF_00178">
    <property type="entry name" value="Lumazine_synth"/>
    <property type="match status" value="1"/>
</dbReference>
<dbReference type="InterPro" id="IPR034964">
    <property type="entry name" value="LS"/>
</dbReference>
<dbReference type="InterPro" id="IPR002180">
    <property type="entry name" value="LS/RS"/>
</dbReference>
<dbReference type="InterPro" id="IPR036467">
    <property type="entry name" value="LS/RS_sf"/>
</dbReference>
<dbReference type="NCBIfam" id="TIGR00114">
    <property type="entry name" value="lumazine-synth"/>
    <property type="match status" value="1"/>
</dbReference>
<dbReference type="NCBIfam" id="NF000812">
    <property type="entry name" value="PRK00061.1-4"/>
    <property type="match status" value="1"/>
</dbReference>
<dbReference type="PANTHER" id="PTHR21058:SF0">
    <property type="entry name" value="6,7-DIMETHYL-8-RIBITYLLUMAZINE SYNTHASE"/>
    <property type="match status" value="1"/>
</dbReference>
<dbReference type="PANTHER" id="PTHR21058">
    <property type="entry name" value="6,7-DIMETHYL-8-RIBITYLLUMAZINE SYNTHASE DMRL SYNTHASE LUMAZINE SYNTHASE"/>
    <property type="match status" value="1"/>
</dbReference>
<dbReference type="Pfam" id="PF00885">
    <property type="entry name" value="DMRL_synthase"/>
    <property type="match status" value="1"/>
</dbReference>
<dbReference type="SUPFAM" id="SSF52121">
    <property type="entry name" value="Lumazine synthase"/>
    <property type="match status" value="1"/>
</dbReference>
<evidence type="ECO:0000255" key="1">
    <source>
        <dbReference type="HAMAP-Rule" id="MF_00178"/>
    </source>
</evidence>
<comment type="function">
    <text evidence="1">Catalyzes the formation of 6,7-dimethyl-8-ribityllumazine by condensation of 5-amino-6-(D-ribitylamino)uracil with 3,4-dihydroxy-2-butanone 4-phosphate. This is the penultimate step in the biosynthesis of riboflavin.</text>
</comment>
<comment type="catalytic activity">
    <reaction evidence="1">
        <text>(2S)-2-hydroxy-3-oxobutyl phosphate + 5-amino-6-(D-ribitylamino)uracil = 6,7-dimethyl-8-(1-D-ribityl)lumazine + phosphate + 2 H2O + H(+)</text>
        <dbReference type="Rhea" id="RHEA:26152"/>
        <dbReference type="ChEBI" id="CHEBI:15377"/>
        <dbReference type="ChEBI" id="CHEBI:15378"/>
        <dbReference type="ChEBI" id="CHEBI:15934"/>
        <dbReference type="ChEBI" id="CHEBI:43474"/>
        <dbReference type="ChEBI" id="CHEBI:58201"/>
        <dbReference type="ChEBI" id="CHEBI:58830"/>
        <dbReference type="EC" id="2.5.1.78"/>
    </reaction>
</comment>
<comment type="pathway">
    <text evidence="1">Cofactor biosynthesis; riboflavin biosynthesis; riboflavin from 2-hydroxy-3-oxobutyl phosphate and 5-amino-6-(D-ribitylamino)uracil: step 1/2.</text>
</comment>
<comment type="subunit">
    <text evidence="1">Forms an icosahedral capsid composed of 60 subunits, arranged as a dodecamer of pentamers.</text>
</comment>
<comment type="similarity">
    <text evidence="1">Belongs to the DMRL synthase family.</text>
</comment>
<name>RISB_SHISS</name>
<reference key="1">
    <citation type="journal article" date="2005" name="Nucleic Acids Res.">
        <title>Genome dynamics and diversity of Shigella species, the etiologic agents of bacillary dysentery.</title>
        <authorList>
            <person name="Yang F."/>
            <person name="Yang J."/>
            <person name="Zhang X."/>
            <person name="Chen L."/>
            <person name="Jiang Y."/>
            <person name="Yan Y."/>
            <person name="Tang X."/>
            <person name="Wang J."/>
            <person name="Xiong Z."/>
            <person name="Dong J."/>
            <person name="Xue Y."/>
            <person name="Zhu Y."/>
            <person name="Xu X."/>
            <person name="Sun L."/>
            <person name="Chen S."/>
            <person name="Nie H."/>
            <person name="Peng J."/>
            <person name="Xu J."/>
            <person name="Wang Y."/>
            <person name="Yuan Z."/>
            <person name="Wen Y."/>
            <person name="Yao Z."/>
            <person name="Shen Y."/>
            <person name="Qiang B."/>
            <person name="Hou Y."/>
            <person name="Yu J."/>
            <person name="Jin Q."/>
        </authorList>
    </citation>
    <scope>NUCLEOTIDE SEQUENCE [LARGE SCALE GENOMIC DNA]</scope>
    <source>
        <strain>Ss046</strain>
    </source>
</reference>